<organism evidence="14">
    <name type="scientific">Mesocricetus auratus</name>
    <name type="common">Golden hamster</name>
    <dbReference type="NCBI Taxonomy" id="10036"/>
    <lineage>
        <taxon>Eukaryota</taxon>
        <taxon>Metazoa</taxon>
        <taxon>Chordata</taxon>
        <taxon>Craniata</taxon>
        <taxon>Vertebrata</taxon>
        <taxon>Euteleostomi</taxon>
        <taxon>Mammalia</taxon>
        <taxon>Eutheria</taxon>
        <taxon>Euarchontoglires</taxon>
        <taxon>Glires</taxon>
        <taxon>Rodentia</taxon>
        <taxon>Myomorpha</taxon>
        <taxon>Muroidea</taxon>
        <taxon>Cricetidae</taxon>
        <taxon>Cricetinae</taxon>
        <taxon>Mesocricetus</taxon>
    </lineage>
</organism>
<comment type="subcellular location">
    <subcellularLocation>
        <location evidence="4 5">Secreted</location>
    </subcellularLocation>
    <subcellularLocation>
        <location evidence="8">Cytoplasm</location>
    </subcellularLocation>
    <text evidence="4 5 8">Located in the cytoplasm of acinar cells in the submandibular salivary gland from where it is secreted into saliva (PubMed:10561587, PubMed:23453961). Secreted by the lacrimal gland into tears (PubMed:15950295). Also secreted by the submandibular salivary gland into circulation and excreted in urine (PubMed:10561587, PubMed:23453961).</text>
</comment>
<comment type="tissue specificity">
    <text evidence="4 5 6 7 8 10">Expressed in acinar cells of the submandibular salivary gland from where it is secreted into saliva (at protein level) (PubMed:10561587, PubMed:23453961, PubMed:8809199). Also released from the submandibular salivary gland into blood and excreted in urine (at protein level) (PubMed:23453961). Expressed in the lacrimal gland from where it is secreted into tears (at protein level) (PubMed:15950295, PubMed:17316636, PubMed:18703064).</text>
</comment>
<comment type="developmental stage">
    <text evidence="4 7">In the submandibular salivary gland, expression is very low in immature animals of both sexes with trace levels at 12 days of age. At 22 and 30 days of age, low levels occur in the submandibular salivary gland of both sexes with females having higher levels than males. At the onset of sexual maturity, abundantly expressed in males and undetectable in non-lactating females but is expressed in lactating females (at protein level) (PubMed:10561587). In the lacrimal gland, detectable in both sexes at 10 days of age but, by 20 days of age, expression is female-specific with no detectable expression in males (PubMed:18703064).</text>
</comment>
<comment type="induction">
    <text evidence="4 5 6 7 10">Repressed by androgens and estrogens (at protein level) (PubMed:10561587, PubMed:15950295, PubMed:17316636, PubMed:8809199). Repression by estrogens and androgens does not occur in immature 20-day old animals (PubMed:18703064).</text>
</comment>
<comment type="PTM">
    <text evidence="4 5">N-glycosylated.</text>
</comment>
<comment type="allergen">
    <text evidence="9">Causes an allergic reaction in human. Binds to IgE.</text>
</comment>
<comment type="similarity">
    <text evidence="3">Belongs to the calycin superfamily. Lipocalin family.</text>
</comment>
<name>MSP_MESAU</name>
<sequence length="172" mass="19375">MVKFLLLALALGVSCAQHQNLEVSPSEVDGKWHSLYIAADNKSKVSEGGPLRVYVKHLECSDECQTFTIKFYTKVENVCQEHRVVGRKGKDGKYITDFSGQNYFHVVEKADDTMTFHNVNVDDSGKTNVILVVGKGESSSIEQKQRFEKTAEKYDIPKENIEHLVTTDTCNQ</sequence>
<keyword id="KW-0020">Allergen</keyword>
<keyword id="KW-0963">Cytoplasm</keyword>
<keyword id="KW-0903">Direct protein sequencing</keyword>
<keyword id="KW-1015">Disulfide bond</keyword>
<keyword id="KW-0325">Glycoprotein</keyword>
<keyword id="KW-1185">Reference proteome</keyword>
<keyword id="KW-0964">Secreted</keyword>
<keyword id="KW-0732">Signal</keyword>
<gene>
    <name evidence="12" type="primary">MSP</name>
</gene>
<reference evidence="14" key="1">
    <citation type="journal article" date="1999" name="Eur. J. Biochem.">
        <title>Abundant secretory lipocalins displaying male and lactation-specific expression in adult hamster submandibular gland. cDNA cloning and sex hormone-regulated repression.</title>
        <authorList>
            <person name="Thavathiru E."/>
            <person name="Jana N.R."/>
            <person name="De P.K."/>
        </authorList>
    </citation>
    <scope>NUCLEOTIDE SEQUENCE [MRNA]</scope>
    <scope>PROTEIN SEQUENCE OF 16-30</scope>
    <scope>SUBCELLULAR LOCATION</scope>
    <scope>TISSUE SPECIFICITY</scope>
    <scope>DEVELOPMENTAL STAGE</scope>
    <scope>INDUCTION</scope>
    <scope>GLYCOSYLATION</scope>
    <source>
        <tissue evidence="11">Submandibular gland</tissue>
    </source>
</reference>
<reference evidence="14" key="2">
    <citation type="journal article" date="2005" name="Biochim. Biophys. Acta">
        <title>cDNA cloning and regulation of two sex-hormone-repressed hamster tear lipocalins having homology with odorant/pheromone-binding proteins.</title>
        <authorList>
            <person name="Srikantan S."/>
            <person name="Parekh V."/>
            <person name="De P.K."/>
        </authorList>
    </citation>
    <scope>NUCLEOTIDE SEQUENCE [MRNA]</scope>
    <scope>PROTEIN SEQUENCE OF 16-30</scope>
    <scope>SUBCELLULAR LOCATION</scope>
    <scope>TISSUE SPECIFICITY</scope>
    <scope>INDUCTION</scope>
    <scope>GLYCOSYLATION</scope>
    <source>
        <tissue evidence="14">Lacrimal gland</tissue>
        <tissue evidence="12">Submandibular gland</tissue>
    </source>
</reference>
<reference evidence="15" key="3">
    <citation type="submission" date="2005-10" db="EMBL/GenBank/DDBJ databases">
        <title>Cloning and characterization of a gene encoding the male-specific submandibular gland protein (MSP) of hamster.</title>
        <authorList>
            <person name="Parekh V."/>
            <person name="Srikantan S."/>
            <person name="De P.K."/>
        </authorList>
    </citation>
    <scope>NUCLEOTIDE SEQUENCE [GENOMIC DNA]</scope>
</reference>
<reference evidence="13" key="4">
    <citation type="journal article" date="1996" name="J. Steroid Biochem. Mol. Biol.">
        <title>Sex-hormonal regulation of 20.5 and 24 kDa major male-specific proteins in Syrian hamster submandibular gland.</title>
        <authorList>
            <person name="De P.K."/>
        </authorList>
    </citation>
    <scope>TISSUE SPECIFICITY</scope>
    <scope>INDUCTION</scope>
</reference>
<reference evidence="13" key="5">
    <citation type="journal article" date="2007" name="Gen. Comp. Endocrinol.">
        <title>Estrogen and androgen repression of two female specific lacrimal lipocalins in hamster: Pituitary independent and sex hormone receptor mediated action.</title>
        <authorList>
            <person name="Srikantan S."/>
            <person name="Paliwal A."/>
            <person name="Quintanar-Stephano A."/>
            <person name="De P.K."/>
        </authorList>
    </citation>
    <scope>TISSUE SPECIFICITY</scope>
    <scope>INDUCTION</scope>
</reference>
<reference evidence="13" key="6">
    <citation type="journal article" date="2008" name="Gen. Comp. Endocrinol.">
        <title>Sex differences in expression and differential regulation by androgen and estrogen of two odorant-binding tear lipocalins in lacrimal glands of immature hamsters.</title>
        <authorList>
            <person name="Srikantan S."/>
            <person name="De P.K."/>
        </authorList>
    </citation>
    <scope>TISSUE SPECIFICITY</scope>
    <scope>DEVELOPMENTAL STAGE</scope>
    <scope>INDUCTION</scope>
</reference>
<reference evidence="13" key="7">
    <citation type="journal article" date="2013" name="Gen. Comp. Endocrinol.">
        <title>Copious urinary excretion of a male Syrian hamster (Mesocricetus auratus) salivary gland protein after its endocrine-like release upon beta-adrenergic stimulation.</title>
        <authorList>
            <person name="Dubey V.P."/>
            <person name="Srikantan S."/>
            <person name="Mohammad M.P."/>
            <person name="Rajan W.D."/>
            <person name="De P.K."/>
        </authorList>
    </citation>
    <scope>SUBCELLULAR LOCATION</scope>
    <scope>TISSUE SPECIFICITY</scope>
</reference>
<reference evidence="13" key="8">
    <citation type="journal article" date="2015" name="Int. Arch. Allergy Immunol.">
        <title>Male-specific submaxillary gland protein, a lipocalin allergen of the golden hamster, differs from the lipocalin allergens of siberian and roborovski dwarf hamsters.</title>
        <authorList>
            <person name="Hilger C."/>
            <person name="Dubey V.P."/>
            <person name="Lentz D."/>
            <person name="Davril C."/>
            <person name="Revets D."/>
            <person name="Muller C.P."/>
            <person name="Diederich C."/>
            <person name="De La Barriere H."/>
            <person name="Codreanu-Morel F."/>
            <person name="Morisset M."/>
            <person name="Lehners C."/>
            <person name="De P.K."/>
            <person name="Hentges F."/>
        </authorList>
    </citation>
    <scope>ALLERGEN</scope>
</reference>
<feature type="signal peptide" evidence="5">
    <location>
        <begin position="1"/>
        <end position="15"/>
    </location>
</feature>
<feature type="chain" id="PRO_5000057056" description="Male-specific submandibular salivary gland protein" evidence="13">
    <location>
        <begin position="16"/>
        <end position="172"/>
    </location>
</feature>
<feature type="glycosylation site" description="N-linked (GlcNAc...) asparagine" evidence="2">
    <location>
        <position position="41"/>
    </location>
</feature>
<feature type="disulfide bond" evidence="1">
    <location>
        <begin position="60"/>
        <end position="64"/>
    </location>
</feature>
<feature type="disulfide bond" evidence="1">
    <location>
        <begin position="79"/>
        <end position="170"/>
    </location>
</feature>
<accession>Q9QXU1</accession>
<evidence type="ECO:0000250" key="1">
    <source>
        <dbReference type="UniProtKB" id="P08937"/>
    </source>
</evidence>
<evidence type="ECO:0000255" key="2">
    <source>
        <dbReference type="PROSITE-ProRule" id="PRU00498"/>
    </source>
</evidence>
<evidence type="ECO:0000255" key="3">
    <source>
        <dbReference type="RuleBase" id="RU003695"/>
    </source>
</evidence>
<evidence type="ECO:0000269" key="4">
    <source>
    </source>
</evidence>
<evidence type="ECO:0000269" key="5">
    <source>
    </source>
</evidence>
<evidence type="ECO:0000269" key="6">
    <source>
    </source>
</evidence>
<evidence type="ECO:0000269" key="7">
    <source>
    </source>
</evidence>
<evidence type="ECO:0000269" key="8">
    <source>
    </source>
</evidence>
<evidence type="ECO:0000269" key="9">
    <source>
    </source>
</evidence>
<evidence type="ECO:0000269" key="10">
    <source>
    </source>
</evidence>
<evidence type="ECO:0000303" key="11">
    <source>
    </source>
</evidence>
<evidence type="ECO:0000303" key="12">
    <source>
    </source>
</evidence>
<evidence type="ECO:0000305" key="13"/>
<evidence type="ECO:0000312" key="14">
    <source>
        <dbReference type="EMBL" id="AAD55792.2"/>
    </source>
</evidence>
<evidence type="ECO:0000312" key="15">
    <source>
        <dbReference type="EMBL" id="AAM00936.1"/>
    </source>
</evidence>
<dbReference type="EMBL" id="AF183407">
    <property type="protein sequence ID" value="AAD55792.2"/>
    <property type="molecule type" value="mRNA"/>
</dbReference>
<dbReference type="EMBL" id="AF491999">
    <property type="protein sequence ID" value="AAM00936.1"/>
    <property type="molecule type" value="Genomic_DNA"/>
</dbReference>
<dbReference type="SMR" id="Q9QXU1"/>
<dbReference type="Allergome" id="11698">
    <property type="allergen name" value="Mes a 1"/>
</dbReference>
<dbReference type="Allergome" id="11699">
    <property type="allergen name" value="Mes a 1.0101"/>
</dbReference>
<dbReference type="GlyCosmos" id="Q9QXU1">
    <property type="glycosylation" value="1 site, No reported glycans"/>
</dbReference>
<dbReference type="OrthoDB" id="9450562at2759"/>
<dbReference type="Proteomes" id="UP000189706">
    <property type="component" value="Unplaced"/>
</dbReference>
<dbReference type="GO" id="GO:0005737">
    <property type="term" value="C:cytoplasm"/>
    <property type="evidence" value="ECO:0000314"/>
    <property type="project" value="UniProtKB"/>
</dbReference>
<dbReference type="GO" id="GO:0005615">
    <property type="term" value="C:extracellular space"/>
    <property type="evidence" value="ECO:0000314"/>
    <property type="project" value="UniProtKB"/>
</dbReference>
<dbReference type="GO" id="GO:0005549">
    <property type="term" value="F:odorant binding"/>
    <property type="evidence" value="ECO:0007669"/>
    <property type="project" value="TreeGrafter"/>
</dbReference>
<dbReference type="GO" id="GO:0036094">
    <property type="term" value="F:small molecule binding"/>
    <property type="evidence" value="ECO:0007669"/>
    <property type="project" value="InterPro"/>
</dbReference>
<dbReference type="CDD" id="cd19427">
    <property type="entry name" value="lipocalin_OBP-like"/>
    <property type="match status" value="1"/>
</dbReference>
<dbReference type="FunFam" id="2.40.128.20:FF:000008">
    <property type="entry name" value="Major urinary protein"/>
    <property type="match status" value="1"/>
</dbReference>
<dbReference type="Gene3D" id="2.40.128.20">
    <property type="match status" value="1"/>
</dbReference>
<dbReference type="InterPro" id="IPR012674">
    <property type="entry name" value="Calycin"/>
</dbReference>
<dbReference type="InterPro" id="IPR002345">
    <property type="entry name" value="Lipocalin"/>
</dbReference>
<dbReference type="InterPro" id="IPR022272">
    <property type="entry name" value="Lipocalin_CS"/>
</dbReference>
<dbReference type="InterPro" id="IPR000566">
    <property type="entry name" value="Lipocln_cytosolic_FA-bd_dom"/>
</dbReference>
<dbReference type="InterPro" id="IPR002448">
    <property type="entry name" value="OBP-like"/>
</dbReference>
<dbReference type="PANTHER" id="PTHR11430">
    <property type="entry name" value="LIPOCALIN"/>
    <property type="match status" value="1"/>
</dbReference>
<dbReference type="PANTHER" id="PTHR11430:SF65">
    <property type="entry name" value="ODORANT-BINDING PROTEIN 1A-RELATED"/>
    <property type="match status" value="1"/>
</dbReference>
<dbReference type="Pfam" id="PF00061">
    <property type="entry name" value="Lipocalin"/>
    <property type="match status" value="1"/>
</dbReference>
<dbReference type="PRINTS" id="PR01173">
    <property type="entry name" value="ODORANTBNDNG"/>
</dbReference>
<dbReference type="SUPFAM" id="SSF50814">
    <property type="entry name" value="Lipocalins"/>
    <property type="match status" value="1"/>
</dbReference>
<dbReference type="PROSITE" id="PS00213">
    <property type="entry name" value="LIPOCALIN"/>
    <property type="match status" value="1"/>
</dbReference>
<proteinExistence type="evidence at protein level"/>
<protein>
    <recommendedName>
        <fullName evidence="12">Male-specific submandibular salivary gland protein</fullName>
    </recommendedName>
</protein>